<comment type="function">
    <text evidence="1">Gibberellin-regulated protein that may function in hormonal controlled steps of development such as seed germination, flowering and seed maturation.</text>
</comment>
<comment type="subcellular location">
    <subcellularLocation>
        <location evidence="1">Secreted</location>
    </subcellularLocation>
</comment>
<comment type="PTM">
    <text evidence="1">Six disulfide bonds may be present.</text>
</comment>
<comment type="similarity">
    <text evidence="3">Belongs to the GASA family.</text>
</comment>
<reference key="1">
    <citation type="journal article" date="2000" name="Nature">
        <title>Sequence and analysis of chromosome 3 of the plant Arabidopsis thaliana.</title>
        <authorList>
            <person name="Salanoubat M."/>
            <person name="Lemcke K."/>
            <person name="Rieger M."/>
            <person name="Ansorge W."/>
            <person name="Unseld M."/>
            <person name="Fartmann B."/>
            <person name="Valle G."/>
            <person name="Bloecker H."/>
            <person name="Perez-Alonso M."/>
            <person name="Obermaier B."/>
            <person name="Delseny M."/>
            <person name="Boutry M."/>
            <person name="Grivell L.A."/>
            <person name="Mache R."/>
            <person name="Puigdomenech P."/>
            <person name="De Simone V."/>
            <person name="Choisne N."/>
            <person name="Artiguenave F."/>
            <person name="Robert C."/>
            <person name="Brottier P."/>
            <person name="Wincker P."/>
            <person name="Cattolico L."/>
            <person name="Weissenbach J."/>
            <person name="Saurin W."/>
            <person name="Quetier F."/>
            <person name="Schaefer M."/>
            <person name="Mueller-Auer S."/>
            <person name="Gabel C."/>
            <person name="Fuchs M."/>
            <person name="Benes V."/>
            <person name="Wurmbach E."/>
            <person name="Drzonek H."/>
            <person name="Erfle H."/>
            <person name="Jordan N."/>
            <person name="Bangert S."/>
            <person name="Wiedelmann R."/>
            <person name="Kranz H."/>
            <person name="Voss H."/>
            <person name="Holland R."/>
            <person name="Brandt P."/>
            <person name="Nyakatura G."/>
            <person name="Vezzi A."/>
            <person name="D'Angelo M."/>
            <person name="Pallavicini A."/>
            <person name="Toppo S."/>
            <person name="Simionati B."/>
            <person name="Conrad A."/>
            <person name="Hornischer K."/>
            <person name="Kauer G."/>
            <person name="Loehnert T.-H."/>
            <person name="Nordsiek G."/>
            <person name="Reichelt J."/>
            <person name="Scharfe M."/>
            <person name="Schoen O."/>
            <person name="Bargues M."/>
            <person name="Terol J."/>
            <person name="Climent J."/>
            <person name="Navarro P."/>
            <person name="Collado C."/>
            <person name="Perez-Perez A."/>
            <person name="Ottenwaelder B."/>
            <person name="Duchemin D."/>
            <person name="Cooke R."/>
            <person name="Laudie M."/>
            <person name="Berger-Llauro C."/>
            <person name="Purnelle B."/>
            <person name="Masuy D."/>
            <person name="de Haan M."/>
            <person name="Maarse A.C."/>
            <person name="Alcaraz J.-P."/>
            <person name="Cottet A."/>
            <person name="Casacuberta E."/>
            <person name="Monfort A."/>
            <person name="Argiriou A."/>
            <person name="Flores M."/>
            <person name="Liguori R."/>
            <person name="Vitale D."/>
            <person name="Mannhaupt G."/>
            <person name="Haase D."/>
            <person name="Schoof H."/>
            <person name="Rudd S."/>
            <person name="Zaccaria P."/>
            <person name="Mewes H.-W."/>
            <person name="Mayer K.F.X."/>
            <person name="Kaul S."/>
            <person name="Town C.D."/>
            <person name="Koo H.L."/>
            <person name="Tallon L.J."/>
            <person name="Jenkins J."/>
            <person name="Rooney T."/>
            <person name="Rizzo M."/>
            <person name="Walts A."/>
            <person name="Utterback T."/>
            <person name="Fujii C.Y."/>
            <person name="Shea T.P."/>
            <person name="Creasy T.H."/>
            <person name="Haas B."/>
            <person name="Maiti R."/>
            <person name="Wu D."/>
            <person name="Peterson J."/>
            <person name="Van Aken S."/>
            <person name="Pai G."/>
            <person name="Militscher J."/>
            <person name="Sellers P."/>
            <person name="Gill J.E."/>
            <person name="Feldblyum T.V."/>
            <person name="Preuss D."/>
            <person name="Lin X."/>
            <person name="Nierman W.C."/>
            <person name="Salzberg S.L."/>
            <person name="White O."/>
            <person name="Venter J.C."/>
            <person name="Fraser C.M."/>
            <person name="Kaneko T."/>
            <person name="Nakamura Y."/>
            <person name="Sato S."/>
            <person name="Kato T."/>
            <person name="Asamizu E."/>
            <person name="Sasamoto S."/>
            <person name="Kimura T."/>
            <person name="Idesawa K."/>
            <person name="Kawashima K."/>
            <person name="Kishida Y."/>
            <person name="Kiyokawa C."/>
            <person name="Kohara M."/>
            <person name="Matsumoto M."/>
            <person name="Matsuno A."/>
            <person name="Muraki A."/>
            <person name="Nakayama S."/>
            <person name="Nakazaki N."/>
            <person name="Shinpo S."/>
            <person name="Takeuchi C."/>
            <person name="Wada T."/>
            <person name="Watanabe A."/>
            <person name="Yamada M."/>
            <person name="Yasuda M."/>
            <person name="Tabata S."/>
        </authorList>
    </citation>
    <scope>NUCLEOTIDE SEQUENCE [LARGE SCALE GENOMIC DNA]</scope>
    <source>
        <strain>cv. Columbia</strain>
    </source>
</reference>
<reference key="2">
    <citation type="journal article" date="2017" name="Plant J.">
        <title>Araport11: a complete reannotation of the Arabidopsis thaliana reference genome.</title>
        <authorList>
            <person name="Cheng C.Y."/>
            <person name="Krishnakumar V."/>
            <person name="Chan A.P."/>
            <person name="Thibaud-Nissen F."/>
            <person name="Schobel S."/>
            <person name="Town C.D."/>
        </authorList>
    </citation>
    <scope>GENOME REANNOTATION</scope>
    <source>
        <strain>cv. Columbia</strain>
    </source>
</reference>
<proteinExistence type="inferred from homology"/>
<protein>
    <recommendedName>
        <fullName>Gibberellin-regulated protein 13</fullName>
    </recommendedName>
    <alternativeName>
        <fullName>GAST1 protein homolog 13</fullName>
    </alternativeName>
</protein>
<evidence type="ECO:0000250" key="1"/>
<evidence type="ECO:0000255" key="2"/>
<evidence type="ECO:0000305" key="3"/>
<feature type="signal peptide" evidence="2">
    <location>
        <begin position="1"/>
        <end position="20"/>
    </location>
</feature>
<feature type="chain" id="PRO_0000413711" description="Gibberellin-regulated protein 13">
    <location>
        <begin position="21"/>
        <end position="103"/>
    </location>
</feature>
<organism>
    <name type="scientific">Arabidopsis thaliana</name>
    <name type="common">Mouse-ear cress</name>
    <dbReference type="NCBI Taxonomy" id="3702"/>
    <lineage>
        <taxon>Eukaryota</taxon>
        <taxon>Viridiplantae</taxon>
        <taxon>Streptophyta</taxon>
        <taxon>Embryophyta</taxon>
        <taxon>Tracheophyta</taxon>
        <taxon>Spermatophyta</taxon>
        <taxon>Magnoliopsida</taxon>
        <taxon>eudicotyledons</taxon>
        <taxon>Gunneridae</taxon>
        <taxon>Pentapetalae</taxon>
        <taxon>rosids</taxon>
        <taxon>malvids</taxon>
        <taxon>Brassicales</taxon>
        <taxon>Brassicaceae</taxon>
        <taxon>Camelineae</taxon>
        <taxon>Arabidopsis</taxon>
    </lineage>
</organism>
<accession>A8MR46</accession>
<name>GASAD_ARATH</name>
<dbReference type="EMBL" id="AC009400">
    <property type="status" value="NOT_ANNOTATED_CDS"/>
    <property type="molecule type" value="Genomic_DNA"/>
</dbReference>
<dbReference type="EMBL" id="CP002686">
    <property type="status" value="NOT_ANNOTATED_CDS"/>
    <property type="molecule type" value="Genomic_DNA"/>
</dbReference>
<dbReference type="SMR" id="A8MR46"/>
<dbReference type="STRING" id="3702.A8MR46"/>
<dbReference type="PaxDb" id="3702-AT3G10185.1"/>
<dbReference type="Araport" id="AT3G10185"/>
<dbReference type="TAIR" id="AT3G10185"/>
<dbReference type="eggNOG" id="ENOG502S20B">
    <property type="taxonomic scope" value="Eukaryota"/>
</dbReference>
<dbReference type="HOGENOM" id="CLU_142643_2_0_1"/>
<dbReference type="InParanoid" id="A8MR46"/>
<dbReference type="PhylomeDB" id="A8MR46"/>
<dbReference type="PRO" id="PR:A8MR46"/>
<dbReference type="Proteomes" id="UP000006548">
    <property type="component" value="Chromosome 3"/>
</dbReference>
<dbReference type="ExpressionAtlas" id="A8MR46">
    <property type="expression patterns" value="baseline and differential"/>
</dbReference>
<dbReference type="GO" id="GO:0005576">
    <property type="term" value="C:extracellular region"/>
    <property type="evidence" value="ECO:0007669"/>
    <property type="project" value="UniProtKB-SubCell"/>
</dbReference>
<dbReference type="GO" id="GO:0009740">
    <property type="term" value="P:gibberellic acid mediated signaling pathway"/>
    <property type="evidence" value="ECO:0007669"/>
    <property type="project" value="UniProtKB-KW"/>
</dbReference>
<dbReference type="InterPro" id="IPR003854">
    <property type="entry name" value="GASA"/>
</dbReference>
<dbReference type="PANTHER" id="PTHR23201">
    <property type="entry name" value="EXTENSIN, PROLINE-RICH PROTEIN"/>
    <property type="match status" value="1"/>
</dbReference>
<dbReference type="PANTHER" id="PTHR23201:SF156">
    <property type="entry name" value="GIBBERELLIN-REGULATED PROTEIN 13"/>
    <property type="match status" value="1"/>
</dbReference>
<dbReference type="Pfam" id="PF02704">
    <property type="entry name" value="GASA"/>
    <property type="match status" value="1"/>
</dbReference>
<gene>
    <name type="primary">GASA13</name>
    <name type="ordered locus">At3g10185</name>
    <name type="ORF">F14P13</name>
</gene>
<sequence length="103" mass="11373">MATKLSIIVFSIVVLHLLLSAHMHFLINVCAECETKSAIPPLLECGPRCGDRCSNTQYKKPCLFFCNKCCNKCLCVPPGTYGNKQVCPCYNNWKTKSGGPKCP</sequence>
<keyword id="KW-1015">Disulfide bond</keyword>
<keyword id="KW-0939">Gibberellin signaling pathway</keyword>
<keyword id="KW-1185">Reference proteome</keyword>
<keyword id="KW-0964">Secreted</keyword>
<keyword id="KW-0732">Signal</keyword>